<evidence type="ECO:0000250" key="1">
    <source>
        <dbReference type="UniProtKB" id="Q8N6R0"/>
    </source>
</evidence>
<evidence type="ECO:0000305" key="2"/>
<comment type="function">
    <text evidence="1">Dual methyltransferase. It catalyzes N-terminal methylation of target proteins via its C-terminus. It catalyzes dimethylation on lysine residues of target proteins via its N-terminus.</text>
</comment>
<comment type="catalytic activity">
    <reaction evidence="1">
        <text>L-lysyl-[protein] + S-adenosyl-L-methionine = N(6)-methyl-L-lysyl-[protein] + S-adenosyl-L-homocysteine + H(+)</text>
        <dbReference type="Rhea" id="RHEA:51736"/>
        <dbReference type="Rhea" id="RHEA-COMP:9752"/>
        <dbReference type="Rhea" id="RHEA-COMP:13053"/>
        <dbReference type="ChEBI" id="CHEBI:15378"/>
        <dbReference type="ChEBI" id="CHEBI:29969"/>
        <dbReference type="ChEBI" id="CHEBI:57856"/>
        <dbReference type="ChEBI" id="CHEBI:59789"/>
        <dbReference type="ChEBI" id="CHEBI:61929"/>
    </reaction>
</comment>
<comment type="catalytic activity">
    <reaction evidence="1">
        <text>N(6)-methyl-L-lysyl-[protein] + S-adenosyl-L-methionine = N(6),N(6)-dimethyl-L-lysyl-[protein] + S-adenosyl-L-homocysteine + H(+)</text>
        <dbReference type="Rhea" id="RHEA:54196"/>
        <dbReference type="Rhea" id="RHEA-COMP:13053"/>
        <dbReference type="Rhea" id="RHEA-COMP:13827"/>
        <dbReference type="ChEBI" id="CHEBI:15378"/>
        <dbReference type="ChEBI" id="CHEBI:57856"/>
        <dbReference type="ChEBI" id="CHEBI:59789"/>
        <dbReference type="ChEBI" id="CHEBI:61929"/>
        <dbReference type="ChEBI" id="CHEBI:61976"/>
    </reaction>
</comment>
<comment type="catalytic activity">
    <reaction evidence="1">
        <text>N-terminal glycyl-L-lysyl-L-glutamyl-[protein] + 3 S-adenosyl-L-methionine = N-terminal N,N,N-trimethyl-glycyl-L-lysyl-L-glutamyl-[protein] + 3 S-adenosyl-L-homocysteine + 3 H(+)</text>
        <dbReference type="Rhea" id="RHEA:58440"/>
        <dbReference type="Rhea" id="RHEA-COMP:15140"/>
        <dbReference type="Rhea" id="RHEA-COMP:15143"/>
        <dbReference type="ChEBI" id="CHEBI:15378"/>
        <dbReference type="ChEBI" id="CHEBI:57856"/>
        <dbReference type="ChEBI" id="CHEBI:59789"/>
        <dbReference type="ChEBI" id="CHEBI:142597"/>
        <dbReference type="ChEBI" id="CHEBI:142600"/>
    </reaction>
</comment>
<comment type="similarity">
    <text evidence="2">Belongs to the methyltransferase superfamily.</text>
</comment>
<gene>
    <name type="ORF">CG2614</name>
</gene>
<reference key="1">
    <citation type="journal article" date="2000" name="Science">
        <title>The genome sequence of Drosophila melanogaster.</title>
        <authorList>
            <person name="Adams M.D."/>
            <person name="Celniker S.E."/>
            <person name="Holt R.A."/>
            <person name="Evans C.A."/>
            <person name="Gocayne J.D."/>
            <person name="Amanatides P.G."/>
            <person name="Scherer S.E."/>
            <person name="Li P.W."/>
            <person name="Hoskins R.A."/>
            <person name="Galle R.F."/>
            <person name="George R.A."/>
            <person name="Lewis S.E."/>
            <person name="Richards S."/>
            <person name="Ashburner M."/>
            <person name="Henderson S.N."/>
            <person name="Sutton G.G."/>
            <person name="Wortman J.R."/>
            <person name="Yandell M.D."/>
            <person name="Zhang Q."/>
            <person name="Chen L.X."/>
            <person name="Brandon R.C."/>
            <person name="Rogers Y.-H.C."/>
            <person name="Blazej R.G."/>
            <person name="Champe M."/>
            <person name="Pfeiffer B.D."/>
            <person name="Wan K.H."/>
            <person name="Doyle C."/>
            <person name="Baxter E.G."/>
            <person name="Helt G."/>
            <person name="Nelson C.R."/>
            <person name="Miklos G.L.G."/>
            <person name="Abril J.F."/>
            <person name="Agbayani A."/>
            <person name="An H.-J."/>
            <person name="Andrews-Pfannkoch C."/>
            <person name="Baldwin D."/>
            <person name="Ballew R.M."/>
            <person name="Basu A."/>
            <person name="Baxendale J."/>
            <person name="Bayraktaroglu L."/>
            <person name="Beasley E.M."/>
            <person name="Beeson K.Y."/>
            <person name="Benos P.V."/>
            <person name="Berman B.P."/>
            <person name="Bhandari D."/>
            <person name="Bolshakov S."/>
            <person name="Borkova D."/>
            <person name="Botchan M.R."/>
            <person name="Bouck J."/>
            <person name="Brokstein P."/>
            <person name="Brottier P."/>
            <person name="Burtis K.C."/>
            <person name="Busam D.A."/>
            <person name="Butler H."/>
            <person name="Cadieu E."/>
            <person name="Center A."/>
            <person name="Chandra I."/>
            <person name="Cherry J.M."/>
            <person name="Cawley S."/>
            <person name="Dahlke C."/>
            <person name="Davenport L.B."/>
            <person name="Davies P."/>
            <person name="de Pablos B."/>
            <person name="Delcher A."/>
            <person name="Deng Z."/>
            <person name="Mays A.D."/>
            <person name="Dew I."/>
            <person name="Dietz S.M."/>
            <person name="Dodson K."/>
            <person name="Doup L.E."/>
            <person name="Downes M."/>
            <person name="Dugan-Rocha S."/>
            <person name="Dunkov B.C."/>
            <person name="Dunn P."/>
            <person name="Durbin K.J."/>
            <person name="Evangelista C.C."/>
            <person name="Ferraz C."/>
            <person name="Ferriera S."/>
            <person name="Fleischmann W."/>
            <person name="Fosler C."/>
            <person name="Gabrielian A.E."/>
            <person name="Garg N.S."/>
            <person name="Gelbart W.M."/>
            <person name="Glasser K."/>
            <person name="Glodek A."/>
            <person name="Gong F."/>
            <person name="Gorrell J.H."/>
            <person name="Gu Z."/>
            <person name="Guan P."/>
            <person name="Harris M."/>
            <person name="Harris N.L."/>
            <person name="Harvey D.A."/>
            <person name="Heiman T.J."/>
            <person name="Hernandez J.R."/>
            <person name="Houck J."/>
            <person name="Hostin D."/>
            <person name="Houston K.A."/>
            <person name="Howland T.J."/>
            <person name="Wei M.-H."/>
            <person name="Ibegwam C."/>
            <person name="Jalali M."/>
            <person name="Kalush F."/>
            <person name="Karpen G.H."/>
            <person name="Ke Z."/>
            <person name="Kennison J.A."/>
            <person name="Ketchum K.A."/>
            <person name="Kimmel B.E."/>
            <person name="Kodira C.D."/>
            <person name="Kraft C.L."/>
            <person name="Kravitz S."/>
            <person name="Kulp D."/>
            <person name="Lai Z."/>
            <person name="Lasko P."/>
            <person name="Lei Y."/>
            <person name="Levitsky A.A."/>
            <person name="Li J.H."/>
            <person name="Li Z."/>
            <person name="Liang Y."/>
            <person name="Lin X."/>
            <person name="Liu X."/>
            <person name="Mattei B."/>
            <person name="McIntosh T.C."/>
            <person name="McLeod M.P."/>
            <person name="McPherson D."/>
            <person name="Merkulov G."/>
            <person name="Milshina N.V."/>
            <person name="Mobarry C."/>
            <person name="Morris J."/>
            <person name="Moshrefi A."/>
            <person name="Mount S.M."/>
            <person name="Moy M."/>
            <person name="Murphy B."/>
            <person name="Murphy L."/>
            <person name="Muzny D.M."/>
            <person name="Nelson D.L."/>
            <person name="Nelson D.R."/>
            <person name="Nelson K.A."/>
            <person name="Nixon K."/>
            <person name="Nusskern D.R."/>
            <person name="Pacleb J.M."/>
            <person name="Palazzolo M."/>
            <person name="Pittman G.S."/>
            <person name="Pan S."/>
            <person name="Pollard J."/>
            <person name="Puri V."/>
            <person name="Reese M.G."/>
            <person name="Reinert K."/>
            <person name="Remington K."/>
            <person name="Saunders R.D.C."/>
            <person name="Scheeler F."/>
            <person name="Shen H."/>
            <person name="Shue B.C."/>
            <person name="Siden-Kiamos I."/>
            <person name="Simpson M."/>
            <person name="Skupski M.P."/>
            <person name="Smith T.J."/>
            <person name="Spier E."/>
            <person name="Spradling A.C."/>
            <person name="Stapleton M."/>
            <person name="Strong R."/>
            <person name="Sun E."/>
            <person name="Svirskas R."/>
            <person name="Tector C."/>
            <person name="Turner R."/>
            <person name="Venter E."/>
            <person name="Wang A.H."/>
            <person name="Wang X."/>
            <person name="Wang Z.-Y."/>
            <person name="Wassarman D.A."/>
            <person name="Weinstock G.M."/>
            <person name="Weissenbach J."/>
            <person name="Williams S.M."/>
            <person name="Woodage T."/>
            <person name="Worley K.C."/>
            <person name="Wu D."/>
            <person name="Yang S."/>
            <person name="Yao Q.A."/>
            <person name="Ye J."/>
            <person name="Yeh R.-F."/>
            <person name="Zaveri J.S."/>
            <person name="Zhan M."/>
            <person name="Zhang G."/>
            <person name="Zhao Q."/>
            <person name="Zheng L."/>
            <person name="Zheng X.H."/>
            <person name="Zhong F.N."/>
            <person name="Zhong W."/>
            <person name="Zhou X."/>
            <person name="Zhu S.C."/>
            <person name="Zhu X."/>
            <person name="Smith H.O."/>
            <person name="Gibbs R.A."/>
            <person name="Myers E.W."/>
            <person name="Rubin G.M."/>
            <person name="Venter J.C."/>
        </authorList>
    </citation>
    <scope>NUCLEOTIDE SEQUENCE [LARGE SCALE GENOMIC DNA]</scope>
    <source>
        <strain>Berkeley</strain>
    </source>
</reference>
<reference key="2">
    <citation type="journal article" date="2002" name="Genome Biol.">
        <title>Annotation of the Drosophila melanogaster euchromatic genome: a systematic review.</title>
        <authorList>
            <person name="Misra S."/>
            <person name="Crosby M.A."/>
            <person name="Mungall C.J."/>
            <person name="Matthews B.B."/>
            <person name="Campbell K.S."/>
            <person name="Hradecky P."/>
            <person name="Huang Y."/>
            <person name="Kaminker J.S."/>
            <person name="Millburn G.H."/>
            <person name="Prochnik S.E."/>
            <person name="Smith C.D."/>
            <person name="Tupy J.L."/>
            <person name="Whitfield E.J."/>
            <person name="Bayraktaroglu L."/>
            <person name="Berman B.P."/>
            <person name="Bettencourt B.R."/>
            <person name="Celniker S.E."/>
            <person name="de Grey A.D.N.J."/>
            <person name="Drysdale R.A."/>
            <person name="Harris N.L."/>
            <person name="Richter J."/>
            <person name="Russo S."/>
            <person name="Schroeder A.J."/>
            <person name="Shu S.Q."/>
            <person name="Stapleton M."/>
            <person name="Yamada C."/>
            <person name="Ashburner M."/>
            <person name="Gelbart W.M."/>
            <person name="Rubin G.M."/>
            <person name="Lewis S.E."/>
        </authorList>
    </citation>
    <scope>GENOME REANNOTATION</scope>
    <source>
        <strain>Berkeley</strain>
    </source>
</reference>
<reference key="3">
    <citation type="journal article" date="2002" name="Genome Biol.">
        <title>A Drosophila full-length cDNA resource.</title>
        <authorList>
            <person name="Stapleton M."/>
            <person name="Carlson J.W."/>
            <person name="Brokstein P."/>
            <person name="Yu C."/>
            <person name="Champe M."/>
            <person name="George R.A."/>
            <person name="Guarin H."/>
            <person name="Kronmiller B."/>
            <person name="Pacleb J.M."/>
            <person name="Park S."/>
            <person name="Wan K.H."/>
            <person name="Rubin G.M."/>
            <person name="Celniker S.E."/>
        </authorList>
    </citation>
    <scope>NUCLEOTIDE SEQUENCE [LARGE SCALE MRNA]</scope>
    <source>
        <strain>Berkeley</strain>
        <tissue>Embryo</tissue>
    </source>
</reference>
<organism>
    <name type="scientific">Drosophila melanogaster</name>
    <name type="common">Fruit fly</name>
    <dbReference type="NCBI Taxonomy" id="7227"/>
    <lineage>
        <taxon>Eukaryota</taxon>
        <taxon>Metazoa</taxon>
        <taxon>Ecdysozoa</taxon>
        <taxon>Arthropoda</taxon>
        <taxon>Hexapoda</taxon>
        <taxon>Insecta</taxon>
        <taxon>Pterygota</taxon>
        <taxon>Neoptera</taxon>
        <taxon>Endopterygota</taxon>
        <taxon>Diptera</taxon>
        <taxon>Brachycera</taxon>
        <taxon>Muscomorpha</taxon>
        <taxon>Ephydroidea</taxon>
        <taxon>Drosophilidae</taxon>
        <taxon>Drosophila</taxon>
        <taxon>Sophophora</taxon>
    </lineage>
</organism>
<name>EFNMT_DROME</name>
<keyword id="KW-0489">Methyltransferase</keyword>
<keyword id="KW-0511">Multifunctional enzyme</keyword>
<keyword id="KW-1185">Reference proteome</keyword>
<keyword id="KW-0808">Transferase</keyword>
<protein>
    <recommendedName>
        <fullName evidence="2">eEF1A lysine and N-terminal methyltransferase homolog</fullName>
    </recommendedName>
    <domain>
        <recommendedName>
            <fullName evidence="2">eEF1A lysine methyltransferase homolog</fullName>
            <ecNumber evidence="1">2.1.1.-</ecNumber>
        </recommendedName>
    </domain>
    <domain>
        <recommendedName>
            <fullName evidence="2">eEF1A N-terminal methyltransferase homolog</fullName>
            <ecNumber evidence="1">2.1.1.-</ecNumber>
        </recommendedName>
    </domain>
</protein>
<sequence>MNLLPKTREEFAQTDYWNEFFKKRGEKAFEWYGEYLELCDQIHKYIKPADRILMLGCGNSKLSMDMYDTGFRDITNIDISPIAVKKMLELNAKSRPEMKFLQMDATAMTFPDESFSVSLDKGTLDALFADDEPETRAVVENYFKEILRTMRNGGRYVGISLLQEHILNFLLDFLPKHNCMLRIVHCLGVEQANKEKNADDALTLPVFVVVATKFKSLPMPVLEFGFGNDKMQRFTTVSELNSAVSSVQKAALVCNGLARSNIAGHNEVIMDLHRPSEQTPRYTIHILDKPPARGLGKYAAFIVPQGREVEWIFSTPAGRKKLQDSANFQRLAVVTLHRDQVYSTLDEVKQELADSIKNLSPAGLTDQIPYLSLGSDVGKRETLICGFSKISGDFRIEEVEANGKTLRRLIFLSNQFVVQSEALVKTVKIKGKKDRKKIDFGYLACQHHLYMSVGVQLATTVQHPKRDVEKDVLVVGLGGGGLCSFLHAALPQARITAVEIDPIMLEVAEQYFELKQDKRFHVVIDDGLDFVERCRNEDIHFDAVLFDVDSKDLSLGMSCPPQSFLATKILQHIKEIIGPKGLFMLNLVCRDESLRTEALNNLHKVFPAVCSYKLEEDINEIIYCANDEKYKTVEQWKKNMGTAGRGLNSAVKETKLASEDALEVAEFLSELKI</sequence>
<feature type="chain" id="PRO_0000310764" description="eEF1A lysine and N-terminal methyltransferase homolog">
    <location>
        <begin position="1"/>
        <end position="673"/>
    </location>
</feature>
<dbReference type="EC" id="2.1.1.-" evidence="1"/>
<dbReference type="EMBL" id="AE014134">
    <property type="protein sequence ID" value="AAF53908.1"/>
    <property type="molecule type" value="Genomic_DNA"/>
</dbReference>
<dbReference type="EMBL" id="AY061160">
    <property type="protein sequence ID" value="AAL28708.1"/>
    <property type="molecule type" value="mRNA"/>
</dbReference>
<dbReference type="RefSeq" id="NP_610045.1">
    <property type="nucleotide sequence ID" value="NM_136201.5"/>
</dbReference>
<dbReference type="SMR" id="Q9VIK9"/>
<dbReference type="BioGRID" id="61290">
    <property type="interactions" value="2"/>
</dbReference>
<dbReference type="FunCoup" id="Q9VIK9">
    <property type="interactions" value="2280"/>
</dbReference>
<dbReference type="STRING" id="7227.FBpp0080918"/>
<dbReference type="PaxDb" id="7227-FBpp0080918"/>
<dbReference type="DNASU" id="35326"/>
<dbReference type="EnsemblMetazoa" id="FBtr0081388">
    <property type="protein sequence ID" value="FBpp0080918"/>
    <property type="gene ID" value="FBgn0032873"/>
</dbReference>
<dbReference type="GeneID" id="35326"/>
<dbReference type="KEGG" id="dme:Dmel_CG2614"/>
<dbReference type="UCSC" id="CG2614-RA">
    <property type="organism name" value="d. melanogaster"/>
</dbReference>
<dbReference type="AGR" id="FB:FBgn0032873"/>
<dbReference type="FlyBase" id="FBgn0032873">
    <property type="gene designation" value="CG2614"/>
</dbReference>
<dbReference type="VEuPathDB" id="VectorBase:FBgn0032873"/>
<dbReference type="eggNOG" id="KOG2352">
    <property type="taxonomic scope" value="Eukaryota"/>
</dbReference>
<dbReference type="GeneTree" id="ENSGT00510000047399"/>
<dbReference type="InParanoid" id="Q9VIK9"/>
<dbReference type="OMA" id="FEWYGAF"/>
<dbReference type="OrthoDB" id="411785at2759"/>
<dbReference type="PhylomeDB" id="Q9VIK9"/>
<dbReference type="BioGRID-ORCS" id="35326">
    <property type="hits" value="0 hits in 1 CRISPR screen"/>
</dbReference>
<dbReference type="GenomeRNAi" id="35326"/>
<dbReference type="PRO" id="PR:Q9VIK9"/>
<dbReference type="Proteomes" id="UP000000803">
    <property type="component" value="Chromosome 2L"/>
</dbReference>
<dbReference type="Bgee" id="FBgn0032873">
    <property type="expression patterns" value="Expressed in embryonic/larval hemocyte (Drosophila) and 50 other cell types or tissues"/>
</dbReference>
<dbReference type="ExpressionAtlas" id="Q9VIK9">
    <property type="expression patterns" value="baseline and differential"/>
</dbReference>
<dbReference type="GO" id="GO:0016279">
    <property type="term" value="F:protein-lysine N-methyltransferase activity"/>
    <property type="evidence" value="ECO:0000250"/>
    <property type="project" value="FlyBase"/>
</dbReference>
<dbReference type="GO" id="GO:0032259">
    <property type="term" value="P:methylation"/>
    <property type="evidence" value="ECO:0007669"/>
    <property type="project" value="UniProtKB-KW"/>
</dbReference>
<dbReference type="CDD" id="cd02440">
    <property type="entry name" value="AdoMet_MTases"/>
    <property type="match status" value="2"/>
</dbReference>
<dbReference type="FunFam" id="3.40.50.150:FF:000462">
    <property type="entry name" value="Methyltransferase-like protein 13"/>
    <property type="match status" value="1"/>
</dbReference>
<dbReference type="FunFam" id="3.40.50.150:FF:000110">
    <property type="entry name" value="methyltransferase-like protein 13 isoform X1"/>
    <property type="match status" value="1"/>
</dbReference>
<dbReference type="Gene3D" id="3.40.50.150">
    <property type="entry name" value="Vaccinia Virus protein VP39"/>
    <property type="match status" value="2"/>
</dbReference>
<dbReference type="InterPro" id="IPR051419">
    <property type="entry name" value="Lys/N-term_MeTrsfase_sf"/>
</dbReference>
<dbReference type="InterPro" id="IPR025714">
    <property type="entry name" value="Methyltranfer_dom"/>
</dbReference>
<dbReference type="InterPro" id="IPR029063">
    <property type="entry name" value="SAM-dependent_MTases_sf"/>
</dbReference>
<dbReference type="PANTHER" id="PTHR12176:SF80">
    <property type="entry name" value="EEF1A LYSINE METHYLTRANSFERASE 4"/>
    <property type="match status" value="1"/>
</dbReference>
<dbReference type="PANTHER" id="PTHR12176">
    <property type="entry name" value="SAM-DEPENDENT METHYLTRANSFERASE SUPERFAMILY PROTEIN"/>
    <property type="match status" value="1"/>
</dbReference>
<dbReference type="Pfam" id="PF13847">
    <property type="entry name" value="Methyltransf_31"/>
    <property type="match status" value="1"/>
</dbReference>
<dbReference type="Pfam" id="PF01564">
    <property type="entry name" value="Spermine_synth"/>
    <property type="match status" value="1"/>
</dbReference>
<dbReference type="SUPFAM" id="SSF53335">
    <property type="entry name" value="S-adenosyl-L-methionine-dependent methyltransferases"/>
    <property type="match status" value="2"/>
</dbReference>
<dbReference type="PROSITE" id="PS00867">
    <property type="entry name" value="CPSASE_2"/>
    <property type="match status" value="1"/>
</dbReference>
<accession>Q9VIK9</accession>
<proteinExistence type="evidence at transcript level"/>